<reference key="1">
    <citation type="journal article" date="2009" name="PLoS Genet.">
        <title>Organised genome dynamics in the Escherichia coli species results in highly diverse adaptive paths.</title>
        <authorList>
            <person name="Touchon M."/>
            <person name="Hoede C."/>
            <person name="Tenaillon O."/>
            <person name="Barbe V."/>
            <person name="Baeriswyl S."/>
            <person name="Bidet P."/>
            <person name="Bingen E."/>
            <person name="Bonacorsi S."/>
            <person name="Bouchier C."/>
            <person name="Bouvet O."/>
            <person name="Calteau A."/>
            <person name="Chiapello H."/>
            <person name="Clermont O."/>
            <person name="Cruveiller S."/>
            <person name="Danchin A."/>
            <person name="Diard M."/>
            <person name="Dossat C."/>
            <person name="Karoui M.E."/>
            <person name="Frapy E."/>
            <person name="Garry L."/>
            <person name="Ghigo J.M."/>
            <person name="Gilles A.M."/>
            <person name="Johnson J."/>
            <person name="Le Bouguenec C."/>
            <person name="Lescat M."/>
            <person name="Mangenot S."/>
            <person name="Martinez-Jehanne V."/>
            <person name="Matic I."/>
            <person name="Nassif X."/>
            <person name="Oztas S."/>
            <person name="Petit M.A."/>
            <person name="Pichon C."/>
            <person name="Rouy Z."/>
            <person name="Ruf C.S."/>
            <person name="Schneider D."/>
            <person name="Tourret J."/>
            <person name="Vacherie B."/>
            <person name="Vallenet D."/>
            <person name="Medigue C."/>
            <person name="Rocha E.P.C."/>
            <person name="Denamur E."/>
        </authorList>
    </citation>
    <scope>NUCLEOTIDE SEQUENCE [LARGE SCALE GENOMIC DNA]</scope>
    <source>
        <strain>55989 / EAEC</strain>
    </source>
</reference>
<dbReference type="EMBL" id="CU928145">
    <property type="protein sequence ID" value="CAV00097.1"/>
    <property type="molecule type" value="Genomic_DNA"/>
</dbReference>
<dbReference type="RefSeq" id="WP_000185247.1">
    <property type="nucleotide sequence ID" value="NZ_CP028304.1"/>
</dbReference>
<dbReference type="SMR" id="B7L4N9"/>
<dbReference type="GeneID" id="75206308"/>
<dbReference type="KEGG" id="eck:EC55989_3770"/>
<dbReference type="HOGENOM" id="CLU_056916_0_0_6"/>
<dbReference type="Proteomes" id="UP000000746">
    <property type="component" value="Chromosome"/>
</dbReference>
<dbReference type="GO" id="GO:0005886">
    <property type="term" value="C:plasma membrane"/>
    <property type="evidence" value="ECO:0007669"/>
    <property type="project" value="UniProtKB-SubCell"/>
</dbReference>
<dbReference type="GO" id="GO:0022857">
    <property type="term" value="F:transmembrane transporter activity"/>
    <property type="evidence" value="ECO:0007669"/>
    <property type="project" value="InterPro"/>
</dbReference>
<dbReference type="CDD" id="cd17333">
    <property type="entry name" value="MFS_FucP_MFSD4_like"/>
    <property type="match status" value="1"/>
</dbReference>
<dbReference type="FunFam" id="1.20.1250.20:FF:000032">
    <property type="entry name" value="Protein TsgA"/>
    <property type="match status" value="1"/>
</dbReference>
<dbReference type="FunFam" id="1.20.1250.20:FF:000052">
    <property type="entry name" value="Protein TsgA"/>
    <property type="match status" value="1"/>
</dbReference>
<dbReference type="Gene3D" id="1.20.1250.20">
    <property type="entry name" value="MFS general substrate transporter like domains"/>
    <property type="match status" value="2"/>
</dbReference>
<dbReference type="HAMAP" id="MF_01044">
    <property type="entry name" value="MFS_TsgA"/>
    <property type="match status" value="1"/>
</dbReference>
<dbReference type="InterPro" id="IPR011701">
    <property type="entry name" value="MFS"/>
</dbReference>
<dbReference type="InterPro" id="IPR020846">
    <property type="entry name" value="MFS_dom"/>
</dbReference>
<dbReference type="InterPro" id="IPR036259">
    <property type="entry name" value="MFS_trans_sf"/>
</dbReference>
<dbReference type="InterPro" id="IPR023528">
    <property type="entry name" value="MFS_TsgA"/>
</dbReference>
<dbReference type="InterPro" id="IPR050375">
    <property type="entry name" value="MFS_TsgA-like"/>
</dbReference>
<dbReference type="NCBIfam" id="NF002982">
    <property type="entry name" value="PRK03699.1"/>
    <property type="match status" value="1"/>
</dbReference>
<dbReference type="PANTHER" id="PTHR43702">
    <property type="entry name" value="L-FUCOSE-PROTON SYMPORTER"/>
    <property type="match status" value="1"/>
</dbReference>
<dbReference type="PANTHER" id="PTHR43702:SF3">
    <property type="entry name" value="PROTEIN TSGA"/>
    <property type="match status" value="1"/>
</dbReference>
<dbReference type="Pfam" id="PF07690">
    <property type="entry name" value="MFS_1"/>
    <property type="match status" value="1"/>
</dbReference>
<dbReference type="SUPFAM" id="SSF103473">
    <property type="entry name" value="MFS general substrate transporter"/>
    <property type="match status" value="1"/>
</dbReference>
<dbReference type="PROSITE" id="PS50850">
    <property type="entry name" value="MFS"/>
    <property type="match status" value="1"/>
</dbReference>
<organism>
    <name type="scientific">Escherichia coli (strain 55989 / EAEC)</name>
    <dbReference type="NCBI Taxonomy" id="585055"/>
    <lineage>
        <taxon>Bacteria</taxon>
        <taxon>Pseudomonadati</taxon>
        <taxon>Pseudomonadota</taxon>
        <taxon>Gammaproteobacteria</taxon>
        <taxon>Enterobacterales</taxon>
        <taxon>Enterobacteriaceae</taxon>
        <taxon>Escherichia</taxon>
    </lineage>
</organism>
<gene>
    <name evidence="1" type="primary">tsgA</name>
    <name type="ordered locus">EC55989_3770</name>
</gene>
<evidence type="ECO:0000255" key="1">
    <source>
        <dbReference type="HAMAP-Rule" id="MF_01044"/>
    </source>
</evidence>
<accession>B7L4N9</accession>
<comment type="subcellular location">
    <subcellularLocation>
        <location evidence="1">Cell inner membrane</location>
        <topology evidence="1">Multi-pass membrane protein</topology>
    </subcellularLocation>
</comment>
<comment type="similarity">
    <text evidence="1">Belongs to the major facilitator superfamily. TsgA family.</text>
</comment>
<keyword id="KW-0997">Cell inner membrane</keyword>
<keyword id="KW-1003">Cell membrane</keyword>
<keyword id="KW-0472">Membrane</keyword>
<keyword id="KW-1185">Reference proteome</keyword>
<keyword id="KW-0812">Transmembrane</keyword>
<keyword id="KW-1133">Transmembrane helix</keyword>
<name>TSGA_ECO55</name>
<proteinExistence type="inferred from homology"/>
<protein>
    <recommendedName>
        <fullName evidence="1">Protein TsgA</fullName>
    </recommendedName>
</protein>
<feature type="chain" id="PRO_1000149596" description="Protein TsgA">
    <location>
        <begin position="1"/>
        <end position="393"/>
    </location>
</feature>
<feature type="transmembrane region" description="Helical" evidence="1">
    <location>
        <begin position="11"/>
        <end position="31"/>
    </location>
</feature>
<feature type="transmembrane region" description="Helical" evidence="1">
    <location>
        <begin position="51"/>
        <end position="71"/>
    </location>
</feature>
<feature type="transmembrane region" description="Helical" evidence="1">
    <location>
        <begin position="78"/>
        <end position="98"/>
    </location>
</feature>
<feature type="transmembrane region" description="Helical" evidence="1">
    <location>
        <begin position="101"/>
        <end position="121"/>
    </location>
</feature>
<feature type="transmembrane region" description="Helical" evidence="1">
    <location>
        <begin position="134"/>
        <end position="154"/>
    </location>
</feature>
<feature type="transmembrane region" description="Helical" evidence="1">
    <location>
        <begin position="162"/>
        <end position="182"/>
    </location>
</feature>
<feature type="transmembrane region" description="Helical" evidence="1">
    <location>
        <begin position="206"/>
        <end position="226"/>
    </location>
</feature>
<feature type="transmembrane region" description="Helical" evidence="1">
    <location>
        <begin position="245"/>
        <end position="265"/>
    </location>
</feature>
<feature type="transmembrane region" description="Helical" evidence="1">
    <location>
        <begin position="273"/>
        <end position="293"/>
    </location>
</feature>
<feature type="transmembrane region" description="Helical" evidence="1">
    <location>
        <begin position="297"/>
        <end position="317"/>
    </location>
</feature>
<feature type="transmembrane region" description="Helical" evidence="1">
    <location>
        <begin position="332"/>
        <end position="352"/>
    </location>
</feature>
<feature type="transmembrane region" description="Helical" evidence="1">
    <location>
        <begin position="361"/>
        <end position="381"/>
    </location>
</feature>
<sequence>MTNSNRIKLTWISFLSYALTGALVIVTGMVMGNIADYFNLPVSSMSNTFTFLNAGILISIFLNAWLMEIVPLKTQLRFGFLLMVLAVAGLMFSHSLALFSAAMFILGVVSGITMSIGTFLVTQMYEGRQRGSRLLFTDSFFSMAGMIFPMIAAFLLARSIEWYWVYACIGLVYVAIFILTFGCEFPALGKHAPKTDAPVEKEKWGIGVLFLSVAALCYILGQLGFISWVPEYAKGLGMSLNDAGTLVSNFWMSYMVGMWAFSFILRFFDLQRILTVLAGLAAILMYVFNTGTPAHMAWSILALGFFSSAIYTTIITLGSQQTKVPSPKLVNFVLTCGTIGTMLTFVVTGPIVEHSGPQAALLTANGLYAVVFVMCFLLGFVSRHRQHNTLTSH</sequence>